<accession>Q5M605</accession>
<evidence type="ECO:0000255" key="1">
    <source>
        <dbReference type="HAMAP-Rule" id="MF_01385"/>
    </source>
</evidence>
<comment type="function">
    <text evidence="1">Required for maturation of urease via the functional incorporation of the urease nickel metallocenter.</text>
</comment>
<comment type="subunit">
    <text evidence="1">UreD, UreF and UreG form a complex that acts as a GTP-hydrolysis-dependent molecular chaperone, activating the urease apoprotein by helping to assemble the nickel containing metallocenter of UreC. The UreE protein probably delivers the nickel.</text>
</comment>
<comment type="subcellular location">
    <subcellularLocation>
        <location evidence="1">Cytoplasm</location>
    </subcellularLocation>
</comment>
<comment type="similarity">
    <text evidence="1">Belongs to the UreF family.</text>
</comment>
<sequence length="237" mass="26915">MNINPFANVSLQDYLEIVQIVDSTFPIGSFNHSFGMENYLREDTVTDDKGYEEWQEAYLASQFKYGEGLVIKLVYDAMVTDNIDQVWYYDKVLTVSTQARETRQGTKMIAKQMLRLIQRLHAIPVLDDYQSKIRKGVAFGNPAIVFALYVFNKGLGCNEAIALYGYSVISTMVQNAVRAIPLGQFAGQEIVLRSFSQLEKMTQEIQELDASYLGANTPGLELAQMKHETQVFRLFMS</sequence>
<organism>
    <name type="scientific">Streptococcus thermophilus (strain ATCC BAA-250 / LMG 18311)</name>
    <dbReference type="NCBI Taxonomy" id="264199"/>
    <lineage>
        <taxon>Bacteria</taxon>
        <taxon>Bacillati</taxon>
        <taxon>Bacillota</taxon>
        <taxon>Bacilli</taxon>
        <taxon>Lactobacillales</taxon>
        <taxon>Streptococcaceae</taxon>
        <taxon>Streptococcus</taxon>
    </lineage>
</organism>
<protein>
    <recommendedName>
        <fullName evidence="1">Urease accessory protein UreF</fullName>
    </recommendedName>
</protein>
<dbReference type="EMBL" id="CP000023">
    <property type="protein sequence ID" value="AAV60007.1"/>
    <property type="molecule type" value="Genomic_DNA"/>
</dbReference>
<dbReference type="RefSeq" id="WP_002946398.1">
    <property type="nucleotide sequence ID" value="NC_006448.1"/>
</dbReference>
<dbReference type="SMR" id="Q5M605"/>
<dbReference type="STRING" id="264199.stu0285"/>
<dbReference type="DNASU" id="3164107"/>
<dbReference type="KEGG" id="stl:stu0285"/>
<dbReference type="eggNOG" id="COG0830">
    <property type="taxonomic scope" value="Bacteria"/>
</dbReference>
<dbReference type="HOGENOM" id="CLU_049215_4_2_9"/>
<dbReference type="Proteomes" id="UP000001170">
    <property type="component" value="Chromosome"/>
</dbReference>
<dbReference type="GO" id="GO:0005737">
    <property type="term" value="C:cytoplasm"/>
    <property type="evidence" value="ECO:0007669"/>
    <property type="project" value="UniProtKB-SubCell"/>
</dbReference>
<dbReference type="GO" id="GO:0016151">
    <property type="term" value="F:nickel cation binding"/>
    <property type="evidence" value="ECO:0007669"/>
    <property type="project" value="UniProtKB-UniRule"/>
</dbReference>
<dbReference type="Gene3D" id="1.10.4190.10">
    <property type="entry name" value="Urease accessory protein UreF"/>
    <property type="match status" value="1"/>
</dbReference>
<dbReference type="HAMAP" id="MF_01385">
    <property type="entry name" value="UreF"/>
    <property type="match status" value="1"/>
</dbReference>
<dbReference type="InterPro" id="IPR002639">
    <property type="entry name" value="UreF"/>
</dbReference>
<dbReference type="InterPro" id="IPR038277">
    <property type="entry name" value="UreF_sf"/>
</dbReference>
<dbReference type="PANTHER" id="PTHR33620">
    <property type="entry name" value="UREASE ACCESSORY PROTEIN F"/>
    <property type="match status" value="1"/>
</dbReference>
<dbReference type="PANTHER" id="PTHR33620:SF1">
    <property type="entry name" value="UREASE ACCESSORY PROTEIN F"/>
    <property type="match status" value="1"/>
</dbReference>
<dbReference type="Pfam" id="PF01730">
    <property type="entry name" value="UreF"/>
    <property type="match status" value="1"/>
</dbReference>
<dbReference type="PIRSF" id="PIRSF009467">
    <property type="entry name" value="Ureas_acces_UreF"/>
    <property type="match status" value="1"/>
</dbReference>
<proteinExistence type="inferred from homology"/>
<gene>
    <name evidence="1" type="primary">ureF</name>
    <name type="ordered locus">stu0285</name>
</gene>
<feature type="chain" id="PRO_1000145141" description="Urease accessory protein UreF">
    <location>
        <begin position="1"/>
        <end position="237"/>
    </location>
</feature>
<reference key="1">
    <citation type="journal article" date="2004" name="Nat. Biotechnol.">
        <title>Complete sequence and comparative genome analysis of the dairy bacterium Streptococcus thermophilus.</title>
        <authorList>
            <person name="Bolotin A."/>
            <person name="Quinquis B."/>
            <person name="Renault P."/>
            <person name="Sorokin A."/>
            <person name="Ehrlich S.D."/>
            <person name="Kulakauskas S."/>
            <person name="Lapidus A."/>
            <person name="Goltsman E."/>
            <person name="Mazur M."/>
            <person name="Pusch G.D."/>
            <person name="Fonstein M."/>
            <person name="Overbeek R."/>
            <person name="Kyprides N."/>
            <person name="Purnelle B."/>
            <person name="Prozzi D."/>
            <person name="Ngui K."/>
            <person name="Masuy D."/>
            <person name="Hancy F."/>
            <person name="Burteau S."/>
            <person name="Boutry M."/>
            <person name="Delcour J."/>
            <person name="Goffeau A."/>
            <person name="Hols P."/>
        </authorList>
    </citation>
    <scope>NUCLEOTIDE SEQUENCE [LARGE SCALE GENOMIC DNA]</scope>
    <source>
        <strain>ATCC BAA-250 / LMG 18311</strain>
    </source>
</reference>
<keyword id="KW-0143">Chaperone</keyword>
<keyword id="KW-0963">Cytoplasm</keyword>
<keyword id="KW-0996">Nickel insertion</keyword>
<keyword id="KW-1185">Reference proteome</keyword>
<name>UREF_STRT2</name>